<proteinExistence type="inferred from homology"/>
<feature type="chain" id="PRO_1000000842" description="Adenylosuccinate synthetase">
    <location>
        <begin position="1"/>
        <end position="431"/>
    </location>
</feature>
<feature type="active site" description="Proton acceptor" evidence="1">
    <location>
        <position position="13"/>
    </location>
</feature>
<feature type="active site" description="Proton donor" evidence="1">
    <location>
        <position position="41"/>
    </location>
</feature>
<feature type="binding site" evidence="1">
    <location>
        <begin position="12"/>
        <end position="18"/>
    </location>
    <ligand>
        <name>GTP</name>
        <dbReference type="ChEBI" id="CHEBI:37565"/>
    </ligand>
</feature>
<feature type="binding site" description="in other chain" evidence="1">
    <location>
        <begin position="13"/>
        <end position="16"/>
    </location>
    <ligand>
        <name>IMP</name>
        <dbReference type="ChEBI" id="CHEBI:58053"/>
        <note>ligand shared between dimeric partners</note>
    </ligand>
</feature>
<feature type="binding site" evidence="1">
    <location>
        <position position="13"/>
    </location>
    <ligand>
        <name>Mg(2+)</name>
        <dbReference type="ChEBI" id="CHEBI:18420"/>
    </ligand>
</feature>
<feature type="binding site" description="in other chain" evidence="1">
    <location>
        <begin position="38"/>
        <end position="41"/>
    </location>
    <ligand>
        <name>IMP</name>
        <dbReference type="ChEBI" id="CHEBI:58053"/>
        <note>ligand shared between dimeric partners</note>
    </ligand>
</feature>
<feature type="binding site" evidence="1">
    <location>
        <begin position="40"/>
        <end position="42"/>
    </location>
    <ligand>
        <name>GTP</name>
        <dbReference type="ChEBI" id="CHEBI:37565"/>
    </ligand>
</feature>
<feature type="binding site" evidence="1">
    <location>
        <position position="40"/>
    </location>
    <ligand>
        <name>Mg(2+)</name>
        <dbReference type="ChEBI" id="CHEBI:18420"/>
    </ligand>
</feature>
<feature type="binding site" description="in other chain" evidence="1">
    <location>
        <position position="128"/>
    </location>
    <ligand>
        <name>IMP</name>
        <dbReference type="ChEBI" id="CHEBI:58053"/>
        <note>ligand shared between dimeric partners</note>
    </ligand>
</feature>
<feature type="binding site" evidence="1">
    <location>
        <position position="142"/>
    </location>
    <ligand>
        <name>IMP</name>
        <dbReference type="ChEBI" id="CHEBI:58053"/>
        <note>ligand shared between dimeric partners</note>
    </ligand>
</feature>
<feature type="binding site" description="in other chain" evidence="1">
    <location>
        <position position="223"/>
    </location>
    <ligand>
        <name>IMP</name>
        <dbReference type="ChEBI" id="CHEBI:58053"/>
        <note>ligand shared between dimeric partners</note>
    </ligand>
</feature>
<feature type="binding site" description="in other chain" evidence="1">
    <location>
        <position position="238"/>
    </location>
    <ligand>
        <name>IMP</name>
        <dbReference type="ChEBI" id="CHEBI:58053"/>
        <note>ligand shared between dimeric partners</note>
    </ligand>
</feature>
<feature type="binding site" evidence="1">
    <location>
        <begin position="297"/>
        <end position="303"/>
    </location>
    <ligand>
        <name>substrate</name>
    </ligand>
</feature>
<feature type="binding site" description="in other chain" evidence="1">
    <location>
        <position position="301"/>
    </location>
    <ligand>
        <name>IMP</name>
        <dbReference type="ChEBI" id="CHEBI:58053"/>
        <note>ligand shared between dimeric partners</note>
    </ligand>
</feature>
<feature type="binding site" evidence="1">
    <location>
        <position position="303"/>
    </location>
    <ligand>
        <name>GTP</name>
        <dbReference type="ChEBI" id="CHEBI:37565"/>
    </ligand>
</feature>
<feature type="binding site" evidence="1">
    <location>
        <begin position="329"/>
        <end position="331"/>
    </location>
    <ligand>
        <name>GTP</name>
        <dbReference type="ChEBI" id="CHEBI:37565"/>
    </ligand>
</feature>
<feature type="binding site" evidence="1">
    <location>
        <begin position="411"/>
        <end position="413"/>
    </location>
    <ligand>
        <name>GTP</name>
        <dbReference type="ChEBI" id="CHEBI:37565"/>
    </ligand>
</feature>
<sequence>MGTVVIVGTQWGDEGKGKITDFLSQGAKVVSRYQGGDNAGHTIHANGEVYKLRLVPSGVLYPHQLSVIGNGVVVNPKSLVGELARLAEQGVTGENLRISDRAHVILPYHIKLDKLQEAAKGADKIGTTNRGIGPAYMDKAARVGIRMADLLDKEIFEERLKANLKAKNEEFVKVYDSTPMNFDDIFEEYYQYGQQLKQYVCDTSIVLNDAIDKGEHVLFEGAQGIMLDIDQGTYPFVTSSNPAGGVTVGAGVGASKIDRVVGVAKAYTSRVGDGPFPTELLDKTGDFIRNAGHEFGTVTGRPRRIGWFDAVVVRHSRRVAGITDLCLNSIDVLTGLDKVKICVAYERDGERVENYPASLKFLSECKPVYEELPGWQEDITKAKTLDDLPENARRYVERITELLGVDLLTFSVGPDRDQTNVLENVWDKVSR</sequence>
<protein>
    <recommendedName>
        <fullName evidence="1">Adenylosuccinate synthetase</fullName>
        <shortName evidence="1">AMPSase</shortName>
        <shortName evidence="1">AdSS</shortName>
        <ecNumber evidence="1">6.3.4.4</ecNumber>
    </recommendedName>
    <alternativeName>
        <fullName evidence="1">IMP--aspartate ligase</fullName>
    </alternativeName>
</protein>
<evidence type="ECO:0000255" key="1">
    <source>
        <dbReference type="HAMAP-Rule" id="MF_00011"/>
    </source>
</evidence>
<keyword id="KW-0963">Cytoplasm</keyword>
<keyword id="KW-0342">GTP-binding</keyword>
<keyword id="KW-0436">Ligase</keyword>
<keyword id="KW-0460">Magnesium</keyword>
<keyword id="KW-0479">Metal-binding</keyword>
<keyword id="KW-0547">Nucleotide-binding</keyword>
<keyword id="KW-0658">Purine biosynthesis</keyword>
<keyword id="KW-1185">Reference proteome</keyword>
<comment type="function">
    <text evidence="1">Plays an important role in the de novo pathway of purine nucleotide biosynthesis. Catalyzes the first committed step in the biosynthesis of AMP from IMP.</text>
</comment>
<comment type="catalytic activity">
    <reaction evidence="1">
        <text>IMP + L-aspartate + GTP = N(6)-(1,2-dicarboxyethyl)-AMP + GDP + phosphate + 2 H(+)</text>
        <dbReference type="Rhea" id="RHEA:15753"/>
        <dbReference type="ChEBI" id="CHEBI:15378"/>
        <dbReference type="ChEBI" id="CHEBI:29991"/>
        <dbReference type="ChEBI" id="CHEBI:37565"/>
        <dbReference type="ChEBI" id="CHEBI:43474"/>
        <dbReference type="ChEBI" id="CHEBI:57567"/>
        <dbReference type="ChEBI" id="CHEBI:58053"/>
        <dbReference type="ChEBI" id="CHEBI:58189"/>
        <dbReference type="EC" id="6.3.4.4"/>
    </reaction>
</comment>
<comment type="cofactor">
    <cofactor evidence="1">
        <name>Mg(2+)</name>
        <dbReference type="ChEBI" id="CHEBI:18420"/>
    </cofactor>
    <text evidence="1">Binds 1 Mg(2+) ion per subunit.</text>
</comment>
<comment type="pathway">
    <text evidence="1">Purine metabolism; AMP biosynthesis via de novo pathway; AMP from IMP: step 1/2.</text>
</comment>
<comment type="subunit">
    <text evidence="1">Homodimer.</text>
</comment>
<comment type="subcellular location">
    <subcellularLocation>
        <location evidence="1">Cytoplasm</location>
    </subcellularLocation>
</comment>
<comment type="similarity">
    <text evidence="1">Belongs to the adenylosuccinate synthetase family.</text>
</comment>
<reference key="1">
    <citation type="journal article" date="2006" name="Proc. Natl. Acad. Sci. U.S.A.">
        <title>Comparative genomics of the lactic acid bacteria.</title>
        <authorList>
            <person name="Makarova K.S."/>
            <person name="Slesarev A."/>
            <person name="Wolf Y.I."/>
            <person name="Sorokin A."/>
            <person name="Mirkin B."/>
            <person name="Koonin E.V."/>
            <person name="Pavlov A."/>
            <person name="Pavlova N."/>
            <person name="Karamychev V."/>
            <person name="Polouchine N."/>
            <person name="Shakhova V."/>
            <person name="Grigoriev I."/>
            <person name="Lou Y."/>
            <person name="Rohksar D."/>
            <person name="Lucas S."/>
            <person name="Huang K."/>
            <person name="Goodstein D.M."/>
            <person name="Hawkins T."/>
            <person name="Plengvidhya V."/>
            <person name="Welker D."/>
            <person name="Hughes J."/>
            <person name="Goh Y."/>
            <person name="Benson A."/>
            <person name="Baldwin K."/>
            <person name="Lee J.-H."/>
            <person name="Diaz-Muniz I."/>
            <person name="Dosti B."/>
            <person name="Smeianov V."/>
            <person name="Wechter W."/>
            <person name="Barabote R."/>
            <person name="Lorca G."/>
            <person name="Altermann E."/>
            <person name="Barrangou R."/>
            <person name="Ganesan B."/>
            <person name="Xie Y."/>
            <person name="Rawsthorne H."/>
            <person name="Tamir D."/>
            <person name="Parker C."/>
            <person name="Breidt F."/>
            <person name="Broadbent J.R."/>
            <person name="Hutkins R."/>
            <person name="O'Sullivan D."/>
            <person name="Steele J."/>
            <person name="Unlu G."/>
            <person name="Saier M.H. Jr."/>
            <person name="Klaenhammer T."/>
            <person name="Richardson P."/>
            <person name="Kozyavkin S."/>
            <person name="Weimer B.C."/>
            <person name="Mills D.A."/>
        </authorList>
    </citation>
    <scope>NUCLEOTIDE SEQUENCE [LARGE SCALE GENOMIC DNA]</scope>
    <source>
        <strain>ATCC 334 / BCRC 17002 / CCUG 31169 / CIP 107868 / KCTC 3260 / NRRL B-441</strain>
    </source>
</reference>
<dbReference type="EC" id="6.3.4.4" evidence="1"/>
<dbReference type="EMBL" id="CP000423">
    <property type="protein sequence ID" value="ABJ68986.1"/>
    <property type="molecule type" value="Genomic_DNA"/>
</dbReference>
<dbReference type="RefSeq" id="WP_003562710.1">
    <property type="nucleotide sequence ID" value="NC_008526.1"/>
</dbReference>
<dbReference type="RefSeq" id="YP_805428.1">
    <property type="nucleotide sequence ID" value="NC_008526.1"/>
</dbReference>
<dbReference type="SMR" id="Q03CT6"/>
<dbReference type="STRING" id="321967.LSEI_0122"/>
<dbReference type="PaxDb" id="321967-LSEI_0122"/>
<dbReference type="KEGG" id="lca:LSEI_0122"/>
<dbReference type="PATRIC" id="fig|321967.11.peg.144"/>
<dbReference type="HOGENOM" id="CLU_029848_0_0_9"/>
<dbReference type="UniPathway" id="UPA00075">
    <property type="reaction ID" value="UER00335"/>
</dbReference>
<dbReference type="Proteomes" id="UP000001651">
    <property type="component" value="Chromosome"/>
</dbReference>
<dbReference type="GO" id="GO:0005737">
    <property type="term" value="C:cytoplasm"/>
    <property type="evidence" value="ECO:0007669"/>
    <property type="project" value="UniProtKB-SubCell"/>
</dbReference>
<dbReference type="GO" id="GO:0004019">
    <property type="term" value="F:adenylosuccinate synthase activity"/>
    <property type="evidence" value="ECO:0007669"/>
    <property type="project" value="UniProtKB-UniRule"/>
</dbReference>
<dbReference type="GO" id="GO:0005525">
    <property type="term" value="F:GTP binding"/>
    <property type="evidence" value="ECO:0007669"/>
    <property type="project" value="UniProtKB-UniRule"/>
</dbReference>
<dbReference type="GO" id="GO:0000287">
    <property type="term" value="F:magnesium ion binding"/>
    <property type="evidence" value="ECO:0007669"/>
    <property type="project" value="UniProtKB-UniRule"/>
</dbReference>
<dbReference type="GO" id="GO:0044208">
    <property type="term" value="P:'de novo' AMP biosynthetic process"/>
    <property type="evidence" value="ECO:0007669"/>
    <property type="project" value="UniProtKB-UniRule"/>
</dbReference>
<dbReference type="GO" id="GO:0046040">
    <property type="term" value="P:IMP metabolic process"/>
    <property type="evidence" value="ECO:0007669"/>
    <property type="project" value="TreeGrafter"/>
</dbReference>
<dbReference type="CDD" id="cd03108">
    <property type="entry name" value="AdSS"/>
    <property type="match status" value="1"/>
</dbReference>
<dbReference type="FunFam" id="1.10.300.10:FF:000001">
    <property type="entry name" value="Adenylosuccinate synthetase"/>
    <property type="match status" value="1"/>
</dbReference>
<dbReference type="FunFam" id="3.90.170.10:FF:000001">
    <property type="entry name" value="Adenylosuccinate synthetase"/>
    <property type="match status" value="1"/>
</dbReference>
<dbReference type="Gene3D" id="3.40.440.10">
    <property type="entry name" value="Adenylosuccinate Synthetase, subunit A, domain 1"/>
    <property type="match status" value="1"/>
</dbReference>
<dbReference type="Gene3D" id="1.10.300.10">
    <property type="entry name" value="Adenylosuccinate Synthetase, subunit A, domain 2"/>
    <property type="match status" value="1"/>
</dbReference>
<dbReference type="Gene3D" id="3.90.170.10">
    <property type="entry name" value="Adenylosuccinate Synthetase, subunit A, domain 3"/>
    <property type="match status" value="1"/>
</dbReference>
<dbReference type="HAMAP" id="MF_00011">
    <property type="entry name" value="Adenylosucc_synth"/>
    <property type="match status" value="1"/>
</dbReference>
<dbReference type="InterPro" id="IPR018220">
    <property type="entry name" value="Adenylosuccin_syn_GTP-bd"/>
</dbReference>
<dbReference type="InterPro" id="IPR033128">
    <property type="entry name" value="Adenylosuccin_syn_Lys_AS"/>
</dbReference>
<dbReference type="InterPro" id="IPR042109">
    <property type="entry name" value="Adenylosuccinate_synth_dom1"/>
</dbReference>
<dbReference type="InterPro" id="IPR042110">
    <property type="entry name" value="Adenylosuccinate_synth_dom2"/>
</dbReference>
<dbReference type="InterPro" id="IPR042111">
    <property type="entry name" value="Adenylosuccinate_synth_dom3"/>
</dbReference>
<dbReference type="InterPro" id="IPR001114">
    <property type="entry name" value="Adenylosuccinate_synthetase"/>
</dbReference>
<dbReference type="InterPro" id="IPR027417">
    <property type="entry name" value="P-loop_NTPase"/>
</dbReference>
<dbReference type="NCBIfam" id="NF002223">
    <property type="entry name" value="PRK01117.1"/>
    <property type="match status" value="1"/>
</dbReference>
<dbReference type="NCBIfam" id="TIGR00184">
    <property type="entry name" value="purA"/>
    <property type="match status" value="1"/>
</dbReference>
<dbReference type="PANTHER" id="PTHR11846">
    <property type="entry name" value="ADENYLOSUCCINATE SYNTHETASE"/>
    <property type="match status" value="1"/>
</dbReference>
<dbReference type="PANTHER" id="PTHR11846:SF0">
    <property type="entry name" value="ADENYLOSUCCINATE SYNTHETASE"/>
    <property type="match status" value="1"/>
</dbReference>
<dbReference type="Pfam" id="PF00709">
    <property type="entry name" value="Adenylsucc_synt"/>
    <property type="match status" value="1"/>
</dbReference>
<dbReference type="SMART" id="SM00788">
    <property type="entry name" value="Adenylsucc_synt"/>
    <property type="match status" value="1"/>
</dbReference>
<dbReference type="SUPFAM" id="SSF52540">
    <property type="entry name" value="P-loop containing nucleoside triphosphate hydrolases"/>
    <property type="match status" value="1"/>
</dbReference>
<dbReference type="PROSITE" id="PS01266">
    <property type="entry name" value="ADENYLOSUCCIN_SYN_1"/>
    <property type="match status" value="1"/>
</dbReference>
<dbReference type="PROSITE" id="PS00513">
    <property type="entry name" value="ADENYLOSUCCIN_SYN_2"/>
    <property type="match status" value="1"/>
</dbReference>
<gene>
    <name evidence="1" type="primary">purA</name>
    <name type="ordered locus">LSEI_0122</name>
</gene>
<organism>
    <name type="scientific">Lacticaseibacillus paracasei (strain ATCC 334 / BCRC 17002 / CCUG 31169 / CIP 107868 / KCTC 3260 / NRRL B-441)</name>
    <name type="common">Lactobacillus paracasei</name>
    <dbReference type="NCBI Taxonomy" id="321967"/>
    <lineage>
        <taxon>Bacteria</taxon>
        <taxon>Bacillati</taxon>
        <taxon>Bacillota</taxon>
        <taxon>Bacilli</taxon>
        <taxon>Lactobacillales</taxon>
        <taxon>Lactobacillaceae</taxon>
        <taxon>Lacticaseibacillus</taxon>
    </lineage>
</organism>
<name>PURA_LACP3</name>
<accession>Q03CT6</accession>